<feature type="chain" id="PRO_0000323897" description="Uridylate kinase">
    <location>
        <begin position="1"/>
        <end position="245"/>
    </location>
</feature>
<feature type="binding site" evidence="1">
    <location>
        <begin position="13"/>
        <end position="16"/>
    </location>
    <ligand>
        <name>ATP</name>
        <dbReference type="ChEBI" id="CHEBI:30616"/>
    </ligand>
</feature>
<feature type="binding site" evidence="1">
    <location>
        <position position="56"/>
    </location>
    <ligand>
        <name>UMP</name>
        <dbReference type="ChEBI" id="CHEBI:57865"/>
    </ligand>
</feature>
<feature type="binding site" evidence="1">
    <location>
        <position position="57"/>
    </location>
    <ligand>
        <name>ATP</name>
        <dbReference type="ChEBI" id="CHEBI:30616"/>
    </ligand>
</feature>
<feature type="binding site" evidence="1">
    <location>
        <position position="61"/>
    </location>
    <ligand>
        <name>ATP</name>
        <dbReference type="ChEBI" id="CHEBI:30616"/>
    </ligand>
</feature>
<feature type="binding site" evidence="1">
    <location>
        <position position="76"/>
    </location>
    <ligand>
        <name>UMP</name>
        <dbReference type="ChEBI" id="CHEBI:57865"/>
    </ligand>
</feature>
<feature type="binding site" evidence="1">
    <location>
        <begin position="138"/>
        <end position="145"/>
    </location>
    <ligand>
        <name>UMP</name>
        <dbReference type="ChEBI" id="CHEBI:57865"/>
    </ligand>
</feature>
<feature type="binding site" evidence="1">
    <location>
        <position position="166"/>
    </location>
    <ligand>
        <name>ATP</name>
        <dbReference type="ChEBI" id="CHEBI:30616"/>
    </ligand>
</feature>
<feature type="binding site" evidence="1">
    <location>
        <position position="172"/>
    </location>
    <ligand>
        <name>ATP</name>
        <dbReference type="ChEBI" id="CHEBI:30616"/>
    </ligand>
</feature>
<feature type="binding site" evidence="1">
    <location>
        <position position="175"/>
    </location>
    <ligand>
        <name>ATP</name>
        <dbReference type="ChEBI" id="CHEBI:30616"/>
    </ligand>
</feature>
<name>PYRH_MYCM1</name>
<proteinExistence type="inferred from homology"/>
<reference key="1">
    <citation type="journal article" date="2004" name="Genome Res.">
        <title>The complete genome and proteome of Mycoplasma mobile.</title>
        <authorList>
            <person name="Jaffe J.D."/>
            <person name="Stange-Thomann N."/>
            <person name="Smith C."/>
            <person name="DeCaprio D."/>
            <person name="Fisher S."/>
            <person name="Butler J."/>
            <person name="Calvo S."/>
            <person name="Elkins T."/>
            <person name="FitzGerald M.G."/>
            <person name="Hafez N."/>
            <person name="Kodira C.D."/>
            <person name="Major J."/>
            <person name="Wang S."/>
            <person name="Wilkinson J."/>
            <person name="Nicol R."/>
            <person name="Nusbaum C."/>
            <person name="Birren B."/>
            <person name="Berg H.C."/>
            <person name="Church G.M."/>
        </authorList>
    </citation>
    <scope>NUCLEOTIDE SEQUENCE [LARGE SCALE GENOMIC DNA]</scope>
    <source>
        <strain>ATCC 43663 / NCTC 11711 / 163 K</strain>
    </source>
</reference>
<comment type="function">
    <text evidence="1">Catalyzes the reversible phosphorylation of UMP to UDP.</text>
</comment>
<comment type="catalytic activity">
    <reaction evidence="1">
        <text>UMP + ATP = UDP + ADP</text>
        <dbReference type="Rhea" id="RHEA:24400"/>
        <dbReference type="ChEBI" id="CHEBI:30616"/>
        <dbReference type="ChEBI" id="CHEBI:57865"/>
        <dbReference type="ChEBI" id="CHEBI:58223"/>
        <dbReference type="ChEBI" id="CHEBI:456216"/>
        <dbReference type="EC" id="2.7.4.22"/>
    </reaction>
</comment>
<comment type="activity regulation">
    <text evidence="1">Inhibited by UTP.</text>
</comment>
<comment type="pathway">
    <text evidence="1">Pyrimidine metabolism; CTP biosynthesis via de novo pathway; UDP from UMP (UMPK route): step 1/1.</text>
</comment>
<comment type="subunit">
    <text evidence="1">Homohexamer.</text>
</comment>
<comment type="subcellular location">
    <subcellularLocation>
        <location evidence="1">Cytoplasm</location>
    </subcellularLocation>
</comment>
<comment type="similarity">
    <text evidence="1">Belongs to the UMP kinase family.</text>
</comment>
<keyword id="KW-0067">ATP-binding</keyword>
<keyword id="KW-0963">Cytoplasm</keyword>
<keyword id="KW-0418">Kinase</keyword>
<keyword id="KW-0547">Nucleotide-binding</keyword>
<keyword id="KW-0665">Pyrimidine biosynthesis</keyword>
<keyword id="KW-1185">Reference proteome</keyword>
<keyword id="KW-0808">Transferase</keyword>
<gene>
    <name evidence="1" type="primary">pyrH</name>
    <name type="ordered locus">MMOB0540</name>
</gene>
<evidence type="ECO:0000255" key="1">
    <source>
        <dbReference type="HAMAP-Rule" id="MF_01220"/>
    </source>
</evidence>
<protein>
    <recommendedName>
        <fullName evidence="1">Uridylate kinase</fullName>
        <shortName evidence="1">UK</shortName>
        <ecNumber evidence="1">2.7.4.22</ecNumber>
    </recommendedName>
    <alternativeName>
        <fullName evidence="1">Uridine monophosphate kinase</fullName>
        <shortName evidence="1">UMP kinase</shortName>
        <shortName evidence="1">UMPK</shortName>
    </alternativeName>
</protein>
<accession>Q6KIN6</accession>
<organism>
    <name type="scientific">Mycoplasma mobile (strain ATCC 43663 / 163K / NCTC 11711)</name>
    <name type="common">Mesomycoplasma mobile</name>
    <dbReference type="NCBI Taxonomy" id="267748"/>
    <lineage>
        <taxon>Bacteria</taxon>
        <taxon>Bacillati</taxon>
        <taxon>Mycoplasmatota</taxon>
        <taxon>Mycoplasmoidales</taxon>
        <taxon>Metamycoplasmataceae</taxon>
        <taxon>Mesomycoplasma</taxon>
    </lineage>
</organism>
<sequence length="245" mass="26768">MECVMKYKRILLKLSGEGLSNKKKSLLIDYEIVKNIAIQLQKIHKQGYEVAIVVGGGNFWRGESASKNGIPRTRADYIGMLATTMNALALQSGFESVGLKARVQSSLSIDGKVAENYITEKAKHYLSNGEIVIFAGGTGRPFFTTDTAATLVASEMQCDVLLMAKNGVNGVYDADPKVSPSAIKFDSLSYDELLHIVLTNGLKIMDSTSVTMAKENNIKILVFDIQEKDSILKVLEGNAEHTKVE</sequence>
<dbReference type="EC" id="2.7.4.22" evidence="1"/>
<dbReference type="EMBL" id="AE017308">
    <property type="protein sequence ID" value="AAT27540.1"/>
    <property type="molecule type" value="Genomic_DNA"/>
</dbReference>
<dbReference type="SMR" id="Q6KIN6"/>
<dbReference type="STRING" id="267748.MMOB0540"/>
<dbReference type="KEGG" id="mmo:MMOB0540"/>
<dbReference type="eggNOG" id="COG0528">
    <property type="taxonomic scope" value="Bacteria"/>
</dbReference>
<dbReference type="HOGENOM" id="CLU_033861_0_1_14"/>
<dbReference type="UniPathway" id="UPA00159">
    <property type="reaction ID" value="UER00275"/>
</dbReference>
<dbReference type="Proteomes" id="UP000009072">
    <property type="component" value="Chromosome"/>
</dbReference>
<dbReference type="GO" id="GO:0005737">
    <property type="term" value="C:cytoplasm"/>
    <property type="evidence" value="ECO:0007669"/>
    <property type="project" value="UniProtKB-SubCell"/>
</dbReference>
<dbReference type="GO" id="GO:0005524">
    <property type="term" value="F:ATP binding"/>
    <property type="evidence" value="ECO:0007669"/>
    <property type="project" value="UniProtKB-KW"/>
</dbReference>
<dbReference type="GO" id="GO:0033862">
    <property type="term" value="F:UMP kinase activity"/>
    <property type="evidence" value="ECO:0007669"/>
    <property type="project" value="UniProtKB-EC"/>
</dbReference>
<dbReference type="GO" id="GO:0044210">
    <property type="term" value="P:'de novo' CTP biosynthetic process"/>
    <property type="evidence" value="ECO:0007669"/>
    <property type="project" value="UniProtKB-UniRule"/>
</dbReference>
<dbReference type="GO" id="GO:0006225">
    <property type="term" value="P:UDP biosynthetic process"/>
    <property type="evidence" value="ECO:0007669"/>
    <property type="project" value="TreeGrafter"/>
</dbReference>
<dbReference type="CDD" id="cd04254">
    <property type="entry name" value="AAK_UMPK-PyrH-Ec"/>
    <property type="match status" value="1"/>
</dbReference>
<dbReference type="FunFam" id="3.40.1160.10:FF:000001">
    <property type="entry name" value="Uridylate kinase"/>
    <property type="match status" value="1"/>
</dbReference>
<dbReference type="Gene3D" id="3.40.1160.10">
    <property type="entry name" value="Acetylglutamate kinase-like"/>
    <property type="match status" value="1"/>
</dbReference>
<dbReference type="HAMAP" id="MF_01220_B">
    <property type="entry name" value="PyrH_B"/>
    <property type="match status" value="1"/>
</dbReference>
<dbReference type="InterPro" id="IPR036393">
    <property type="entry name" value="AceGlu_kinase-like_sf"/>
</dbReference>
<dbReference type="InterPro" id="IPR001048">
    <property type="entry name" value="Asp/Glu/Uridylate_kinase"/>
</dbReference>
<dbReference type="InterPro" id="IPR011817">
    <property type="entry name" value="Uridylate_kinase"/>
</dbReference>
<dbReference type="InterPro" id="IPR015963">
    <property type="entry name" value="Uridylate_kinase_bac"/>
</dbReference>
<dbReference type="NCBIfam" id="TIGR02075">
    <property type="entry name" value="pyrH_bact"/>
    <property type="match status" value="1"/>
</dbReference>
<dbReference type="PANTHER" id="PTHR42833">
    <property type="entry name" value="URIDYLATE KINASE"/>
    <property type="match status" value="1"/>
</dbReference>
<dbReference type="PANTHER" id="PTHR42833:SF4">
    <property type="entry name" value="URIDYLATE KINASE PUMPKIN, CHLOROPLASTIC"/>
    <property type="match status" value="1"/>
</dbReference>
<dbReference type="Pfam" id="PF00696">
    <property type="entry name" value="AA_kinase"/>
    <property type="match status" value="1"/>
</dbReference>
<dbReference type="PIRSF" id="PIRSF005650">
    <property type="entry name" value="Uridylate_kin"/>
    <property type="match status" value="1"/>
</dbReference>
<dbReference type="SUPFAM" id="SSF53633">
    <property type="entry name" value="Carbamate kinase-like"/>
    <property type="match status" value="1"/>
</dbReference>